<accession>Q7LZQ4</accession>
<organism>
    <name type="scientific">Gloydius ussuriensis</name>
    <name type="common">Ussuri mamushi</name>
    <name type="synonym">Gloydius blomhoffii ussuriensis</name>
    <dbReference type="NCBI Taxonomy" id="35671"/>
    <lineage>
        <taxon>Eukaryota</taxon>
        <taxon>Metazoa</taxon>
        <taxon>Chordata</taxon>
        <taxon>Craniata</taxon>
        <taxon>Vertebrata</taxon>
        <taxon>Euteleostomi</taxon>
        <taxon>Lepidosauria</taxon>
        <taxon>Squamata</taxon>
        <taxon>Bifurcata</taxon>
        <taxon>Unidentata</taxon>
        <taxon>Episquamata</taxon>
        <taxon>Toxicofera</taxon>
        <taxon>Serpentes</taxon>
        <taxon>Colubroidea</taxon>
        <taxon>Viperidae</taxon>
        <taxon>Crotalinae</taxon>
        <taxon>Gloydius</taxon>
    </lineage>
</organism>
<proteinExistence type="evidence at protein level"/>
<name>PA2A_GLOUS</name>
<reference key="1">
    <citation type="journal article" date="1999" name="Fukuoka Univ. Sci. Rep.">
        <title>Purification and amino acid sequence of acidic phospholipase A2 with platelet aggregation inhibitory activity from the venom of Agkistrodon ussuriensis.</title>
        <authorList>
            <person name="Terada S."/>
        </authorList>
    </citation>
    <scope>PROTEIN SEQUENCE</scope>
    <scope>FUNCTION</scope>
    <source>
        <tissue>Venom</tissue>
    </source>
</reference>
<sequence>SLIQFETLIMKVAKKSGMFWYSNYGCYCGWGGQGRPQDATDRCCFVHDCCYGKVTGCDPKMDVYSFSEENGDIVCGGDDPCKKEICECDRAAAICFRDNLNTYNDKKYWAFGAKNCPQEESEPC</sequence>
<keyword id="KW-0106">Calcium</keyword>
<keyword id="KW-0903">Direct protein sequencing</keyword>
<keyword id="KW-1015">Disulfide bond</keyword>
<keyword id="KW-1199">Hemostasis impairing toxin</keyword>
<keyword id="KW-0378">Hydrolase</keyword>
<keyword id="KW-0442">Lipid degradation</keyword>
<keyword id="KW-0443">Lipid metabolism</keyword>
<keyword id="KW-0479">Metal-binding</keyword>
<keyword id="KW-1201">Platelet aggregation inhibiting toxin</keyword>
<keyword id="KW-0964">Secreted</keyword>
<keyword id="KW-0800">Toxin</keyword>
<feature type="chain" id="PRO_0000161594" description="Acidic phospholipase A2">
    <location>
        <begin position="1"/>
        <end position="124"/>
    </location>
</feature>
<feature type="active site" evidence="3">
    <location>
        <position position="47"/>
    </location>
</feature>
<feature type="active site" evidence="3">
    <location>
        <position position="89"/>
    </location>
</feature>
<feature type="binding site" evidence="2">
    <location>
        <position position="27"/>
    </location>
    <ligand>
        <name>Ca(2+)</name>
        <dbReference type="ChEBI" id="CHEBI:29108"/>
    </ligand>
</feature>
<feature type="binding site" evidence="2">
    <location>
        <position position="29"/>
    </location>
    <ligand>
        <name>Ca(2+)</name>
        <dbReference type="ChEBI" id="CHEBI:29108"/>
    </ligand>
</feature>
<feature type="binding site" evidence="2">
    <location>
        <position position="31"/>
    </location>
    <ligand>
        <name>Ca(2+)</name>
        <dbReference type="ChEBI" id="CHEBI:29108"/>
    </ligand>
</feature>
<feature type="binding site" evidence="2">
    <location>
        <position position="48"/>
    </location>
    <ligand>
        <name>Ca(2+)</name>
        <dbReference type="ChEBI" id="CHEBI:29108"/>
    </ligand>
</feature>
<feature type="disulfide bond" evidence="2">
    <location>
        <begin position="26"/>
        <end position="116"/>
    </location>
</feature>
<feature type="disulfide bond" evidence="2">
    <location>
        <begin position="28"/>
        <end position="44"/>
    </location>
</feature>
<feature type="disulfide bond" evidence="2">
    <location>
        <begin position="43"/>
        <end position="95"/>
    </location>
</feature>
<feature type="disulfide bond" evidence="2">
    <location>
        <begin position="49"/>
        <end position="124"/>
    </location>
</feature>
<feature type="disulfide bond" evidence="2">
    <location>
        <begin position="50"/>
        <end position="88"/>
    </location>
</feature>
<feature type="disulfide bond" evidence="2">
    <location>
        <begin position="57"/>
        <end position="81"/>
    </location>
</feature>
<feature type="disulfide bond" evidence="2">
    <location>
        <begin position="75"/>
        <end position="86"/>
    </location>
</feature>
<dbReference type="EC" id="3.1.1.4"/>
<dbReference type="PIR" id="A59420">
    <property type="entry name" value="A59420"/>
</dbReference>
<dbReference type="SMR" id="Q7LZQ4"/>
<dbReference type="GO" id="GO:0005576">
    <property type="term" value="C:extracellular region"/>
    <property type="evidence" value="ECO:0007669"/>
    <property type="project" value="UniProtKB-SubCell"/>
</dbReference>
<dbReference type="GO" id="GO:0005509">
    <property type="term" value="F:calcium ion binding"/>
    <property type="evidence" value="ECO:0007669"/>
    <property type="project" value="InterPro"/>
</dbReference>
<dbReference type="GO" id="GO:0047498">
    <property type="term" value="F:calcium-dependent phospholipase A2 activity"/>
    <property type="evidence" value="ECO:0007669"/>
    <property type="project" value="TreeGrafter"/>
</dbReference>
<dbReference type="GO" id="GO:0005543">
    <property type="term" value="F:phospholipid binding"/>
    <property type="evidence" value="ECO:0007669"/>
    <property type="project" value="TreeGrafter"/>
</dbReference>
<dbReference type="GO" id="GO:0090729">
    <property type="term" value="F:toxin activity"/>
    <property type="evidence" value="ECO:0007669"/>
    <property type="project" value="UniProtKB-KW"/>
</dbReference>
<dbReference type="GO" id="GO:0050482">
    <property type="term" value="P:arachidonate secretion"/>
    <property type="evidence" value="ECO:0007669"/>
    <property type="project" value="InterPro"/>
</dbReference>
<dbReference type="GO" id="GO:0016042">
    <property type="term" value="P:lipid catabolic process"/>
    <property type="evidence" value="ECO:0007669"/>
    <property type="project" value="UniProtKB-KW"/>
</dbReference>
<dbReference type="GO" id="GO:0042130">
    <property type="term" value="P:negative regulation of T cell proliferation"/>
    <property type="evidence" value="ECO:0007669"/>
    <property type="project" value="TreeGrafter"/>
</dbReference>
<dbReference type="GO" id="GO:0006644">
    <property type="term" value="P:phospholipid metabolic process"/>
    <property type="evidence" value="ECO:0007669"/>
    <property type="project" value="InterPro"/>
</dbReference>
<dbReference type="CDD" id="cd00125">
    <property type="entry name" value="PLA2c"/>
    <property type="match status" value="1"/>
</dbReference>
<dbReference type="FunFam" id="1.20.90.10:FF:000001">
    <property type="entry name" value="Basic phospholipase A2 homolog"/>
    <property type="match status" value="1"/>
</dbReference>
<dbReference type="Gene3D" id="1.20.90.10">
    <property type="entry name" value="Phospholipase A2 domain"/>
    <property type="match status" value="1"/>
</dbReference>
<dbReference type="InterPro" id="IPR001211">
    <property type="entry name" value="PLipase_A2"/>
</dbReference>
<dbReference type="InterPro" id="IPR033112">
    <property type="entry name" value="PLipase_A2_Asp_AS"/>
</dbReference>
<dbReference type="InterPro" id="IPR016090">
    <property type="entry name" value="PLipase_A2_dom"/>
</dbReference>
<dbReference type="InterPro" id="IPR036444">
    <property type="entry name" value="PLipase_A2_dom_sf"/>
</dbReference>
<dbReference type="InterPro" id="IPR033113">
    <property type="entry name" value="PLipase_A2_His_AS"/>
</dbReference>
<dbReference type="PANTHER" id="PTHR11716">
    <property type="entry name" value="PHOSPHOLIPASE A2 FAMILY MEMBER"/>
    <property type="match status" value="1"/>
</dbReference>
<dbReference type="PANTHER" id="PTHR11716:SF9">
    <property type="entry name" value="PHOSPHOLIPASE A2, MEMBRANE ASSOCIATED"/>
    <property type="match status" value="1"/>
</dbReference>
<dbReference type="Pfam" id="PF00068">
    <property type="entry name" value="Phospholip_A2_1"/>
    <property type="match status" value="1"/>
</dbReference>
<dbReference type="PRINTS" id="PR00389">
    <property type="entry name" value="PHPHLIPASEA2"/>
</dbReference>
<dbReference type="SMART" id="SM00085">
    <property type="entry name" value="PA2c"/>
    <property type="match status" value="1"/>
</dbReference>
<dbReference type="SUPFAM" id="SSF48619">
    <property type="entry name" value="Phospholipase A2, PLA2"/>
    <property type="match status" value="1"/>
</dbReference>
<dbReference type="PROSITE" id="PS00119">
    <property type="entry name" value="PA2_ASP"/>
    <property type="match status" value="1"/>
</dbReference>
<dbReference type="PROSITE" id="PS00118">
    <property type="entry name" value="PA2_HIS"/>
    <property type="match status" value="1"/>
</dbReference>
<evidence type="ECO:0000250" key="1"/>
<evidence type="ECO:0000250" key="2">
    <source>
        <dbReference type="UniProtKB" id="O42191"/>
    </source>
</evidence>
<evidence type="ECO:0000250" key="3">
    <source>
        <dbReference type="UniProtKB" id="P06859"/>
    </source>
</evidence>
<evidence type="ECO:0000255" key="4">
    <source>
        <dbReference type="PROSITE-ProRule" id="PRU10035"/>
    </source>
</evidence>
<evidence type="ECO:0000255" key="5">
    <source>
        <dbReference type="PROSITE-ProRule" id="PRU10036"/>
    </source>
</evidence>
<evidence type="ECO:0000269" key="6">
    <source ref="1"/>
</evidence>
<evidence type="ECO:0000305" key="7"/>
<protein>
    <recommendedName>
        <fullName>Acidic phospholipase A2</fullName>
        <shortName>svPLA2</shortName>
        <ecNumber>3.1.1.4</ecNumber>
    </recommendedName>
    <alternativeName>
        <fullName>Phosphatidylcholine 2-acylhydrolase</fullName>
    </alternativeName>
</protein>
<comment type="function">
    <text evidence="6">Snake venom phospholipase A2 (PLA2) that inhibits ADP-induced platelet aggregation. PLA2 catalyzes the calcium-dependent hydrolysis of the 2-acyl groups in 3-sn-phosphoglycerides.</text>
</comment>
<comment type="catalytic activity">
    <reaction evidence="4 5">
        <text>a 1,2-diacyl-sn-glycero-3-phosphocholine + H2O = a 1-acyl-sn-glycero-3-phosphocholine + a fatty acid + H(+)</text>
        <dbReference type="Rhea" id="RHEA:15801"/>
        <dbReference type="ChEBI" id="CHEBI:15377"/>
        <dbReference type="ChEBI" id="CHEBI:15378"/>
        <dbReference type="ChEBI" id="CHEBI:28868"/>
        <dbReference type="ChEBI" id="CHEBI:57643"/>
        <dbReference type="ChEBI" id="CHEBI:58168"/>
        <dbReference type="EC" id="3.1.1.4"/>
    </reaction>
</comment>
<comment type="cofactor">
    <cofactor evidence="1">
        <name>Ca(2+)</name>
        <dbReference type="ChEBI" id="CHEBI:29108"/>
    </cofactor>
    <text evidence="1">Binds 1 Ca(2+) ion.</text>
</comment>
<comment type="subcellular location">
    <subcellularLocation>
        <location>Secreted</location>
    </subcellularLocation>
</comment>
<comment type="tissue specificity">
    <text>Expressed by the venom gland.</text>
</comment>
<comment type="similarity">
    <text evidence="7">Belongs to the phospholipase A2 family. Group II subfamily. D49 sub-subfamily.</text>
</comment>